<reference key="1">
    <citation type="submission" date="2005-10" db="EMBL/GenBank/DDBJ databases">
        <title>Complete sequence of chromosome 1 of Burkholderia sp. 383.</title>
        <authorList>
            <consortium name="US DOE Joint Genome Institute"/>
            <person name="Copeland A."/>
            <person name="Lucas S."/>
            <person name="Lapidus A."/>
            <person name="Barry K."/>
            <person name="Detter J.C."/>
            <person name="Glavina T."/>
            <person name="Hammon N."/>
            <person name="Israni S."/>
            <person name="Pitluck S."/>
            <person name="Chain P."/>
            <person name="Malfatti S."/>
            <person name="Shin M."/>
            <person name="Vergez L."/>
            <person name="Schmutz J."/>
            <person name="Larimer F."/>
            <person name="Land M."/>
            <person name="Kyrpides N."/>
            <person name="Lykidis A."/>
            <person name="Richardson P."/>
        </authorList>
    </citation>
    <scope>NUCLEOTIDE SEQUENCE [LARGE SCALE GENOMIC DNA]</scope>
    <source>
        <strain>ATCC 17760 / DSM 23089 / LMG 22485 / NCIMB 9086 / R18194 / 383</strain>
    </source>
</reference>
<feature type="chain" id="PRO_1000064900" description="Cell division protein ZapD">
    <location>
        <begin position="1"/>
        <end position="251"/>
    </location>
</feature>
<sequence length="251" mass="28956">MILYEYPFNERIRTLLRLEDLFERFAFFLAQEDPREHHVALTTLFEIAEVTGRADLKSDLMKELERQRQTLAPFRGNPGIEQNALEAVLGEIEQTLANLAQMQGKTGQHLVDNEWLASIRSRAVIPGGTCKFDLPSYYAWQQWPAEQRRQDIAKWILPMLPLRDAVTIVLRLARESGQASKVMAMQGSYQQMLSGRTYQLMQVRVPPELRVIPEASANKYMLWVRFTVQDGDVRPRAVDIDVPFHLTLCNL</sequence>
<accession>Q39JV6</accession>
<evidence type="ECO:0000255" key="1">
    <source>
        <dbReference type="HAMAP-Rule" id="MF_01092"/>
    </source>
</evidence>
<protein>
    <recommendedName>
        <fullName evidence="1">Cell division protein ZapD</fullName>
    </recommendedName>
    <alternativeName>
        <fullName evidence="1">Z ring-associated protein D</fullName>
    </alternativeName>
</protein>
<name>ZAPD_BURL3</name>
<proteinExistence type="inferred from homology"/>
<dbReference type="EMBL" id="CP000151">
    <property type="protein sequence ID" value="ABB07260.1"/>
    <property type="molecule type" value="Genomic_DNA"/>
</dbReference>
<dbReference type="RefSeq" id="WP_011350852.1">
    <property type="nucleotide sequence ID" value="NC_007510.1"/>
</dbReference>
<dbReference type="SMR" id="Q39JV6"/>
<dbReference type="GeneID" id="45093572"/>
<dbReference type="KEGG" id="bur:Bcep18194_A3659"/>
<dbReference type="PATRIC" id="fig|482957.22.peg.513"/>
<dbReference type="HOGENOM" id="CLU_076303_0_1_4"/>
<dbReference type="Proteomes" id="UP000002705">
    <property type="component" value="Chromosome 1"/>
</dbReference>
<dbReference type="GO" id="GO:0032153">
    <property type="term" value="C:cell division site"/>
    <property type="evidence" value="ECO:0007669"/>
    <property type="project" value="TreeGrafter"/>
</dbReference>
<dbReference type="GO" id="GO:0005737">
    <property type="term" value="C:cytoplasm"/>
    <property type="evidence" value="ECO:0007669"/>
    <property type="project" value="UniProtKB-SubCell"/>
</dbReference>
<dbReference type="GO" id="GO:0000917">
    <property type="term" value="P:division septum assembly"/>
    <property type="evidence" value="ECO:0007669"/>
    <property type="project" value="UniProtKB-KW"/>
</dbReference>
<dbReference type="GO" id="GO:0043093">
    <property type="term" value="P:FtsZ-dependent cytokinesis"/>
    <property type="evidence" value="ECO:0007669"/>
    <property type="project" value="UniProtKB-UniRule"/>
</dbReference>
<dbReference type="Gene3D" id="1.10.3900.10">
    <property type="entry name" value="YacF-like"/>
    <property type="match status" value="1"/>
</dbReference>
<dbReference type="Gene3D" id="2.60.440.10">
    <property type="entry name" value="YacF-like domains"/>
    <property type="match status" value="1"/>
</dbReference>
<dbReference type="HAMAP" id="MF_01092">
    <property type="entry name" value="ZapD"/>
    <property type="match status" value="1"/>
</dbReference>
<dbReference type="InterPro" id="IPR009777">
    <property type="entry name" value="ZapD"/>
</dbReference>
<dbReference type="InterPro" id="IPR027462">
    <property type="entry name" value="ZapD_C"/>
</dbReference>
<dbReference type="InterPro" id="IPR036268">
    <property type="entry name" value="ZapD_sf"/>
</dbReference>
<dbReference type="NCBIfam" id="NF003656">
    <property type="entry name" value="PRK05287.1-4"/>
    <property type="match status" value="1"/>
</dbReference>
<dbReference type="PANTHER" id="PTHR39455">
    <property type="entry name" value="CELL DIVISION PROTEIN ZAPD"/>
    <property type="match status" value="1"/>
</dbReference>
<dbReference type="PANTHER" id="PTHR39455:SF1">
    <property type="entry name" value="CELL DIVISION PROTEIN ZAPD"/>
    <property type="match status" value="1"/>
</dbReference>
<dbReference type="Pfam" id="PF07072">
    <property type="entry name" value="ZapD"/>
    <property type="match status" value="1"/>
</dbReference>
<dbReference type="SUPFAM" id="SSF160950">
    <property type="entry name" value="YacF-like"/>
    <property type="match status" value="1"/>
</dbReference>
<keyword id="KW-0131">Cell cycle</keyword>
<keyword id="KW-0132">Cell division</keyword>
<keyword id="KW-0963">Cytoplasm</keyword>
<keyword id="KW-0717">Septation</keyword>
<organism>
    <name type="scientific">Burkholderia lata (strain ATCC 17760 / DSM 23089 / LMG 22485 / NCIMB 9086 / R18194 / 383)</name>
    <dbReference type="NCBI Taxonomy" id="482957"/>
    <lineage>
        <taxon>Bacteria</taxon>
        <taxon>Pseudomonadati</taxon>
        <taxon>Pseudomonadota</taxon>
        <taxon>Betaproteobacteria</taxon>
        <taxon>Burkholderiales</taxon>
        <taxon>Burkholderiaceae</taxon>
        <taxon>Burkholderia</taxon>
        <taxon>Burkholderia cepacia complex</taxon>
    </lineage>
</organism>
<comment type="function">
    <text evidence="1">Cell division factor that enhances FtsZ-ring assembly. Directly interacts with FtsZ and promotes bundling of FtsZ protofilaments, with a reduction in FtsZ GTPase activity.</text>
</comment>
<comment type="subunit">
    <text evidence="1">Interacts with FtsZ.</text>
</comment>
<comment type="subcellular location">
    <subcellularLocation>
        <location evidence="1">Cytoplasm</location>
    </subcellularLocation>
    <text evidence="1">Localizes to mid-cell in an FtsZ-dependent manner.</text>
</comment>
<comment type="similarity">
    <text evidence="1">Belongs to the ZapD family.</text>
</comment>
<gene>
    <name evidence="1" type="primary">zapD</name>
    <name type="ordered locus">Bcep18194_A3659</name>
</gene>